<dbReference type="EC" id="4.1.99.17" evidence="1"/>
<dbReference type="EMBL" id="AE015924">
    <property type="protein sequence ID" value="AAQ67069.1"/>
    <property type="molecule type" value="Genomic_DNA"/>
</dbReference>
<dbReference type="RefSeq" id="WP_005873759.1">
    <property type="nucleotide sequence ID" value="NC_002950.2"/>
</dbReference>
<dbReference type="SMR" id="Q7MT71"/>
<dbReference type="STRING" id="242619.PG_2110"/>
<dbReference type="EnsemblBacteria" id="AAQ67069">
    <property type="protein sequence ID" value="AAQ67069"/>
    <property type="gene ID" value="PG_2110"/>
</dbReference>
<dbReference type="KEGG" id="pgi:PG_2110"/>
<dbReference type="PATRIC" id="fig|242619.8.peg.1965"/>
<dbReference type="eggNOG" id="COG0422">
    <property type="taxonomic scope" value="Bacteria"/>
</dbReference>
<dbReference type="HOGENOM" id="CLU_013181_2_1_10"/>
<dbReference type="BioCyc" id="PGIN242619:G1G02-1981-MONOMER"/>
<dbReference type="UniPathway" id="UPA00060"/>
<dbReference type="Proteomes" id="UP000000588">
    <property type="component" value="Chromosome"/>
</dbReference>
<dbReference type="GO" id="GO:0005829">
    <property type="term" value="C:cytosol"/>
    <property type="evidence" value="ECO:0007669"/>
    <property type="project" value="TreeGrafter"/>
</dbReference>
<dbReference type="GO" id="GO:0051539">
    <property type="term" value="F:4 iron, 4 sulfur cluster binding"/>
    <property type="evidence" value="ECO:0007669"/>
    <property type="project" value="UniProtKB-KW"/>
</dbReference>
<dbReference type="GO" id="GO:0016830">
    <property type="term" value="F:carbon-carbon lyase activity"/>
    <property type="evidence" value="ECO:0007669"/>
    <property type="project" value="InterPro"/>
</dbReference>
<dbReference type="GO" id="GO:0008270">
    <property type="term" value="F:zinc ion binding"/>
    <property type="evidence" value="ECO:0007669"/>
    <property type="project" value="UniProtKB-UniRule"/>
</dbReference>
<dbReference type="GO" id="GO:0009228">
    <property type="term" value="P:thiamine biosynthetic process"/>
    <property type="evidence" value="ECO:0007669"/>
    <property type="project" value="UniProtKB-KW"/>
</dbReference>
<dbReference type="GO" id="GO:0009229">
    <property type="term" value="P:thiamine diphosphate biosynthetic process"/>
    <property type="evidence" value="ECO:0007669"/>
    <property type="project" value="UniProtKB-UniRule"/>
</dbReference>
<dbReference type="FunFam" id="3.20.20.540:FF:000001">
    <property type="entry name" value="Phosphomethylpyrimidine synthase"/>
    <property type="match status" value="1"/>
</dbReference>
<dbReference type="Gene3D" id="6.10.250.620">
    <property type="match status" value="1"/>
</dbReference>
<dbReference type="Gene3D" id="3.20.20.540">
    <property type="entry name" value="Radical SAM ThiC family, central domain"/>
    <property type="match status" value="1"/>
</dbReference>
<dbReference type="HAMAP" id="MF_00089">
    <property type="entry name" value="ThiC"/>
    <property type="match status" value="1"/>
</dbReference>
<dbReference type="InterPro" id="IPR037509">
    <property type="entry name" value="ThiC"/>
</dbReference>
<dbReference type="InterPro" id="IPR025747">
    <property type="entry name" value="ThiC-associated_dom"/>
</dbReference>
<dbReference type="InterPro" id="IPR038521">
    <property type="entry name" value="ThiC/Bza_core_dom"/>
</dbReference>
<dbReference type="InterPro" id="IPR002817">
    <property type="entry name" value="ThiC/BzaA/B"/>
</dbReference>
<dbReference type="NCBIfam" id="NF006763">
    <property type="entry name" value="PRK09284.1"/>
    <property type="match status" value="1"/>
</dbReference>
<dbReference type="NCBIfam" id="NF009895">
    <property type="entry name" value="PRK13352.1"/>
    <property type="match status" value="1"/>
</dbReference>
<dbReference type="NCBIfam" id="TIGR00190">
    <property type="entry name" value="thiC"/>
    <property type="match status" value="1"/>
</dbReference>
<dbReference type="PANTHER" id="PTHR30557:SF1">
    <property type="entry name" value="PHOSPHOMETHYLPYRIMIDINE SYNTHASE, CHLOROPLASTIC"/>
    <property type="match status" value="1"/>
</dbReference>
<dbReference type="PANTHER" id="PTHR30557">
    <property type="entry name" value="THIAMINE BIOSYNTHESIS PROTEIN THIC"/>
    <property type="match status" value="1"/>
</dbReference>
<dbReference type="Pfam" id="PF13667">
    <property type="entry name" value="ThiC-associated"/>
    <property type="match status" value="1"/>
</dbReference>
<dbReference type="Pfam" id="PF01964">
    <property type="entry name" value="ThiC_Rad_SAM"/>
    <property type="match status" value="1"/>
</dbReference>
<dbReference type="SFLD" id="SFLDF00407">
    <property type="entry name" value="phosphomethylpyrimidine_syntha"/>
    <property type="match status" value="1"/>
</dbReference>
<dbReference type="SFLD" id="SFLDG01114">
    <property type="entry name" value="phosphomethylpyrimidine_syntha"/>
    <property type="match status" value="1"/>
</dbReference>
<dbReference type="SFLD" id="SFLDS00113">
    <property type="entry name" value="Radical_SAM_Phosphomethylpyrim"/>
    <property type="match status" value="1"/>
</dbReference>
<organism>
    <name type="scientific">Porphyromonas gingivalis (strain ATCC BAA-308 / W83)</name>
    <dbReference type="NCBI Taxonomy" id="242619"/>
    <lineage>
        <taxon>Bacteria</taxon>
        <taxon>Pseudomonadati</taxon>
        <taxon>Bacteroidota</taxon>
        <taxon>Bacteroidia</taxon>
        <taxon>Bacteroidales</taxon>
        <taxon>Porphyromonadaceae</taxon>
        <taxon>Porphyromonas</taxon>
    </lineage>
</organism>
<proteinExistence type="inferred from homology"/>
<name>THIC_PORGI</name>
<comment type="function">
    <text evidence="1">Catalyzes the synthesis of the hydroxymethylpyrimidine phosphate (HMP-P) moiety of thiamine from aminoimidazole ribotide (AIR) in a radical S-adenosyl-L-methionine (SAM)-dependent reaction.</text>
</comment>
<comment type="catalytic activity">
    <reaction evidence="1">
        <text>5-amino-1-(5-phospho-beta-D-ribosyl)imidazole + S-adenosyl-L-methionine = 4-amino-2-methyl-5-(phosphooxymethyl)pyrimidine + CO + 5'-deoxyadenosine + formate + L-methionine + 3 H(+)</text>
        <dbReference type="Rhea" id="RHEA:24840"/>
        <dbReference type="ChEBI" id="CHEBI:15378"/>
        <dbReference type="ChEBI" id="CHEBI:15740"/>
        <dbReference type="ChEBI" id="CHEBI:17245"/>
        <dbReference type="ChEBI" id="CHEBI:17319"/>
        <dbReference type="ChEBI" id="CHEBI:57844"/>
        <dbReference type="ChEBI" id="CHEBI:58354"/>
        <dbReference type="ChEBI" id="CHEBI:59789"/>
        <dbReference type="ChEBI" id="CHEBI:137981"/>
        <dbReference type="EC" id="4.1.99.17"/>
    </reaction>
</comment>
<comment type="cofactor">
    <cofactor evidence="1">
        <name>[4Fe-4S] cluster</name>
        <dbReference type="ChEBI" id="CHEBI:49883"/>
    </cofactor>
    <text evidence="1">Binds 1 [4Fe-4S] cluster per subunit. The cluster is coordinated with 3 cysteines and an exchangeable S-adenosyl-L-methionine.</text>
</comment>
<comment type="pathway">
    <text evidence="1">Cofactor biosynthesis; thiamine diphosphate biosynthesis.</text>
</comment>
<comment type="similarity">
    <text evidence="1">Belongs to the ThiC family.</text>
</comment>
<evidence type="ECO:0000255" key="1">
    <source>
        <dbReference type="HAMAP-Rule" id="MF_00089"/>
    </source>
</evidence>
<keyword id="KW-0004">4Fe-4S</keyword>
<keyword id="KW-0408">Iron</keyword>
<keyword id="KW-0411">Iron-sulfur</keyword>
<keyword id="KW-0456">Lyase</keyword>
<keyword id="KW-0479">Metal-binding</keyword>
<keyword id="KW-1185">Reference proteome</keyword>
<keyword id="KW-0949">S-adenosyl-L-methionine</keyword>
<keyword id="KW-0784">Thiamine biosynthesis</keyword>
<keyword id="KW-0862">Zinc</keyword>
<feature type="chain" id="PRO_0000152821" description="Phosphomethylpyrimidine synthase">
    <location>
        <begin position="1"/>
        <end position="587"/>
    </location>
</feature>
<feature type="binding site" evidence="1">
    <location>
        <position position="218"/>
    </location>
    <ligand>
        <name>substrate</name>
    </ligand>
</feature>
<feature type="binding site" evidence="1">
    <location>
        <position position="247"/>
    </location>
    <ligand>
        <name>substrate</name>
    </ligand>
</feature>
<feature type="binding site" evidence="1">
    <location>
        <position position="276"/>
    </location>
    <ligand>
        <name>substrate</name>
    </ligand>
</feature>
<feature type="binding site" evidence="1">
    <location>
        <position position="312"/>
    </location>
    <ligand>
        <name>substrate</name>
    </ligand>
</feature>
<feature type="binding site" evidence="1">
    <location>
        <begin position="332"/>
        <end position="334"/>
    </location>
    <ligand>
        <name>substrate</name>
    </ligand>
</feature>
<feature type="binding site" evidence="1">
    <location>
        <begin position="373"/>
        <end position="376"/>
    </location>
    <ligand>
        <name>substrate</name>
    </ligand>
</feature>
<feature type="binding site" evidence="1">
    <location>
        <position position="412"/>
    </location>
    <ligand>
        <name>substrate</name>
    </ligand>
</feature>
<feature type="binding site" evidence="1">
    <location>
        <position position="416"/>
    </location>
    <ligand>
        <name>Zn(2+)</name>
        <dbReference type="ChEBI" id="CHEBI:29105"/>
    </ligand>
</feature>
<feature type="binding site" evidence="1">
    <location>
        <position position="439"/>
    </location>
    <ligand>
        <name>substrate</name>
    </ligand>
</feature>
<feature type="binding site" evidence="1">
    <location>
        <position position="480"/>
    </location>
    <ligand>
        <name>Zn(2+)</name>
        <dbReference type="ChEBI" id="CHEBI:29105"/>
    </ligand>
</feature>
<feature type="binding site" evidence="1">
    <location>
        <position position="560"/>
    </location>
    <ligand>
        <name>[4Fe-4S] cluster</name>
        <dbReference type="ChEBI" id="CHEBI:49883"/>
        <note>4Fe-4S-S-AdoMet</note>
    </ligand>
</feature>
<feature type="binding site" evidence="1">
    <location>
        <position position="563"/>
    </location>
    <ligand>
        <name>[4Fe-4S] cluster</name>
        <dbReference type="ChEBI" id="CHEBI:49883"/>
        <note>4Fe-4S-S-AdoMet</note>
    </ligand>
</feature>
<feature type="binding site" evidence="1">
    <location>
        <position position="568"/>
    </location>
    <ligand>
        <name>[4Fe-4S] cluster</name>
        <dbReference type="ChEBI" id="CHEBI:49883"/>
        <note>4Fe-4S-S-AdoMet</note>
    </ligand>
</feature>
<gene>
    <name evidence="1" type="primary">thiC</name>
    <name type="ordered locus">PG_2110</name>
</gene>
<protein>
    <recommendedName>
        <fullName evidence="1">Phosphomethylpyrimidine synthase</fullName>
        <ecNumber evidence="1">4.1.99.17</ecNumber>
    </recommendedName>
    <alternativeName>
        <fullName evidence="1">Hydroxymethylpyrimidine phosphate synthase</fullName>
        <shortName evidence="1">HMP-P synthase</shortName>
        <shortName evidence="1">HMP-phosphate synthase</shortName>
        <shortName evidence="1">HMPP synthase</shortName>
    </alternativeName>
    <alternativeName>
        <fullName evidence="1">Thiamine biosynthesis protein ThiC</fullName>
    </alternativeName>
</protein>
<reference key="1">
    <citation type="journal article" date="2003" name="J. Bacteriol.">
        <title>Complete genome sequence of the oral pathogenic bacterium Porphyromonas gingivalis strain W83.</title>
        <authorList>
            <person name="Nelson K.E."/>
            <person name="Fleischmann R.D."/>
            <person name="DeBoy R.T."/>
            <person name="Paulsen I.T."/>
            <person name="Fouts D.E."/>
            <person name="Eisen J.A."/>
            <person name="Daugherty S.C."/>
            <person name="Dodson R.J."/>
            <person name="Durkin A.S."/>
            <person name="Gwinn M.L."/>
            <person name="Haft D.H."/>
            <person name="Kolonay J.F."/>
            <person name="Nelson W.C."/>
            <person name="Mason T.M."/>
            <person name="Tallon L."/>
            <person name="Gray J."/>
            <person name="Granger D."/>
            <person name="Tettelin H."/>
            <person name="Dong H."/>
            <person name="Galvin J.L."/>
            <person name="Duncan M.J."/>
            <person name="Dewhirst F.E."/>
            <person name="Fraser C.M."/>
        </authorList>
    </citation>
    <scope>NUCLEOTIDE SEQUENCE [LARGE SCALE GENOMIC DNA]</scope>
    <source>
        <strain>ATCC BAA-308 / W83</strain>
    </source>
</reference>
<accession>Q7MT71</accession>
<sequence>MKEFKVTTGPLPGSEKIYVEGERFPFLRVPMRRIRMSDTILENGEREKNEDVVVYDTSGPYTDTSYEVNLHRGVPKIREQWIEDRGDTVRLEGLSSEYGRIRQSDASLEKLRYEHVCTRPRAAKDGCATQLYYARQGIVTPEMEFVAIRENQLIDQVRTRYRAEEGEPLGAVIPRKITPEFVRDEIAAGRAILPANINHPESEPMIIGRNFLVKINANIGNSPISSTIEEEVEKAVWAIRWGADTVMDLSTGDHIHETREWIIRNSPVPIGTVPLYQTLEKVQGDVTKLNWEIFRDTLIEQAEQGVDYFTIHAGLRWHHVPLTLRRLTGIVSRGGSIIANWCTTHKRESFIYEHFEEICQILARYDVAISLGDGLRPGCIHDANDAAQIAELKTLGELTEIAWKYNVQTIIEGPGHVPMHKIRENMEIQLEACHGAPFYTLGPLVSDVASGYDHITSAIGAAQIGWFGTAMLCYVTQKEHLGLPNREDVREGVVTYRLAAHAADLAKGHPTAYWRDYMMSKARFEFRWKDQFHLSLDPEKAIQFHDATLPDEGHKEAHFCSMCGEHFCSMRANKNFRKLLNEEAVSK</sequence>